<name>AAEX_YERPA</name>
<dbReference type="EMBL" id="CP000308">
    <property type="protein sequence ID" value="ABG15659.1"/>
    <property type="molecule type" value="Genomic_DNA"/>
</dbReference>
<dbReference type="RefSeq" id="WP_002210093.1">
    <property type="nucleotide sequence ID" value="NZ_CP009906.1"/>
</dbReference>
<dbReference type="GeneID" id="57975109"/>
<dbReference type="KEGG" id="ypa:YPA_3697"/>
<dbReference type="Proteomes" id="UP000001971">
    <property type="component" value="Chromosome"/>
</dbReference>
<dbReference type="GO" id="GO:0005886">
    <property type="term" value="C:plasma membrane"/>
    <property type="evidence" value="ECO:0007669"/>
    <property type="project" value="UniProtKB-SubCell"/>
</dbReference>
<dbReference type="HAMAP" id="MF_01546">
    <property type="entry name" value="AaeX"/>
    <property type="match status" value="1"/>
</dbReference>
<dbReference type="InterPro" id="IPR012451">
    <property type="entry name" value="DUF1656"/>
</dbReference>
<dbReference type="NCBIfam" id="NF008615">
    <property type="entry name" value="PRK11594.1"/>
    <property type="match status" value="1"/>
</dbReference>
<dbReference type="Pfam" id="PF07869">
    <property type="entry name" value="DUF1656"/>
    <property type="match status" value="1"/>
</dbReference>
<protein>
    <recommendedName>
        <fullName evidence="1">Protein AaeX</fullName>
    </recommendedName>
</protein>
<keyword id="KW-1003">Cell membrane</keyword>
<keyword id="KW-0472">Membrane</keyword>
<keyword id="KW-0812">Transmembrane</keyword>
<keyword id="KW-1133">Transmembrane helix</keyword>
<comment type="subcellular location">
    <subcellularLocation>
        <location evidence="1">Cell membrane</location>
        <topology evidence="1">Multi-pass membrane protein</topology>
    </subcellularLocation>
</comment>
<comment type="similarity">
    <text evidence="1">Belongs to the AaeX family.</text>
</comment>
<feature type="chain" id="PRO_0000300582" description="Protein AaeX">
    <location>
        <begin position="1"/>
        <end position="67"/>
    </location>
</feature>
<feature type="transmembrane region" description="Helical" evidence="1">
    <location>
        <begin position="3"/>
        <end position="23"/>
    </location>
</feature>
<feature type="transmembrane region" description="Helical" evidence="1">
    <location>
        <begin position="39"/>
        <end position="59"/>
    </location>
</feature>
<accession>Q1C1L3</accession>
<evidence type="ECO:0000255" key="1">
    <source>
        <dbReference type="HAMAP-Rule" id="MF_01546"/>
    </source>
</evidence>
<sequence>MSLLPVMVIFGLSFPPIFLELLISLALFFVVRRILQPTGIYEFVWHPALFNTALYCCLFYLTSRLFS</sequence>
<proteinExistence type="inferred from homology"/>
<organism>
    <name type="scientific">Yersinia pestis bv. Antiqua (strain Antiqua)</name>
    <dbReference type="NCBI Taxonomy" id="360102"/>
    <lineage>
        <taxon>Bacteria</taxon>
        <taxon>Pseudomonadati</taxon>
        <taxon>Pseudomonadota</taxon>
        <taxon>Gammaproteobacteria</taxon>
        <taxon>Enterobacterales</taxon>
        <taxon>Yersiniaceae</taxon>
        <taxon>Yersinia</taxon>
    </lineage>
</organism>
<gene>
    <name evidence="1" type="primary">aaeX</name>
    <name type="ordered locus">YPA_3697</name>
</gene>
<reference key="1">
    <citation type="journal article" date="2006" name="J. Bacteriol.">
        <title>Complete genome sequence of Yersinia pestis strains Antiqua and Nepal516: evidence of gene reduction in an emerging pathogen.</title>
        <authorList>
            <person name="Chain P.S.G."/>
            <person name="Hu P."/>
            <person name="Malfatti S.A."/>
            <person name="Radnedge L."/>
            <person name="Larimer F."/>
            <person name="Vergez L.M."/>
            <person name="Worsham P."/>
            <person name="Chu M.C."/>
            <person name="Andersen G.L."/>
        </authorList>
    </citation>
    <scope>NUCLEOTIDE SEQUENCE [LARGE SCALE GENOMIC DNA]</scope>
    <source>
        <strain>Antiqua</strain>
    </source>
</reference>